<reference key="1">
    <citation type="submission" date="1998-11" db="EMBL/GenBank/DDBJ databases">
        <title>5'-AMP-activated protein kinase subunit beta interacts with the p42 subunit of translation initiation factor eIF3.</title>
        <authorList>
            <person name="Valentijn L.J."/>
            <person name="Hoff E.I."/>
            <person name="Baas F."/>
        </authorList>
    </citation>
    <scope>NUCLEOTIDE SEQUENCE [MRNA]</scope>
    <source>
        <strain>CD-1</strain>
    </source>
</reference>
<reference key="2">
    <citation type="journal article" date="2004" name="Genome Res.">
        <title>The status, quality, and expansion of the NIH full-length cDNA project: the Mammalian Gene Collection (MGC).</title>
        <authorList>
            <consortium name="The MGC Project Team"/>
        </authorList>
    </citation>
    <scope>NUCLEOTIDE SEQUENCE [LARGE SCALE MRNA]</scope>
</reference>
<reference key="3">
    <citation type="journal article" date="2009" name="Immunity">
        <title>The phagosomal proteome in interferon-gamma-activated macrophages.</title>
        <authorList>
            <person name="Trost M."/>
            <person name="English L."/>
            <person name="Lemieux S."/>
            <person name="Courcelles M."/>
            <person name="Desjardins M."/>
            <person name="Thibault P."/>
        </authorList>
    </citation>
    <scope>PHOSPHORYLATION [LARGE SCALE ANALYSIS] AT SER-108</scope>
    <scope>IDENTIFICATION BY MASS SPECTROMETRY [LARGE SCALE ANALYSIS]</scope>
</reference>
<reference key="4">
    <citation type="journal article" date="2009" name="Mol. Cell. Proteomics">
        <title>Large scale localization of protein phosphorylation by use of electron capture dissociation mass spectrometry.</title>
        <authorList>
            <person name="Sweet S.M."/>
            <person name="Bailey C.M."/>
            <person name="Cunningham D.L."/>
            <person name="Heath J.K."/>
            <person name="Cooper H.J."/>
        </authorList>
    </citation>
    <scope>PHOSPHORYLATION [LARGE SCALE ANALYSIS] AT SER-108</scope>
    <scope>IDENTIFICATION BY MASS SPECTROMETRY [LARGE SCALE ANALYSIS]</scope>
    <source>
        <tissue>Embryonic fibroblast</tissue>
    </source>
</reference>
<reference key="5">
    <citation type="journal article" date="2010" name="Cell">
        <title>A tissue-specific atlas of mouse protein phosphorylation and expression.</title>
        <authorList>
            <person name="Huttlin E.L."/>
            <person name="Jedrychowski M.P."/>
            <person name="Elias J.E."/>
            <person name="Goswami T."/>
            <person name="Rad R."/>
            <person name="Beausoleil S.A."/>
            <person name="Villen J."/>
            <person name="Haas W."/>
            <person name="Sowa M.E."/>
            <person name="Gygi S.P."/>
        </authorList>
    </citation>
    <scope>PHOSPHORYLATION [LARGE SCALE ANALYSIS] AT SER-96; SER-108 AND SER-182</scope>
    <scope>IDENTIFICATION BY MASS SPECTROMETRY [LARGE SCALE ANALYSIS]</scope>
    <source>
        <tissue>Brain</tissue>
        <tissue>Brown adipose tissue</tissue>
        <tissue>Heart</tissue>
        <tissue>Kidney</tissue>
        <tissue>Liver</tissue>
        <tissue>Lung</tissue>
        <tissue>Pancreas</tissue>
        <tissue>Spleen</tissue>
        <tissue>Testis</tissue>
    </source>
</reference>
<reference key="6">
    <citation type="journal article" date="2011" name="Autophagy">
        <title>Ulk1-mediated phosphorylation of AMPK constitutes a negative regulatory feedback loop.</title>
        <authorList>
            <person name="Loffler A.S."/>
            <person name="Alers S."/>
            <person name="Dieterle A.M."/>
            <person name="Keppeler H."/>
            <person name="Franz-Wachtel M."/>
            <person name="Kundu M."/>
            <person name="Campbell D.G."/>
            <person name="Wesselborg S."/>
            <person name="Alessi D.R."/>
            <person name="Stork B."/>
        </authorList>
    </citation>
    <scope>PHOSPHORYLATION BY ULK1</scope>
</reference>
<reference key="7">
    <citation type="journal article" date="2013" name="Mol. Cell">
        <title>SIRT5-mediated lysine desuccinylation impacts diverse metabolic pathways.</title>
        <authorList>
            <person name="Park J."/>
            <person name="Chen Y."/>
            <person name="Tishkoff D.X."/>
            <person name="Peng C."/>
            <person name="Tan M."/>
            <person name="Dai L."/>
            <person name="Xie Z."/>
            <person name="Zhang Y."/>
            <person name="Zwaans B.M."/>
            <person name="Skinner M.E."/>
            <person name="Lombard D.B."/>
            <person name="Zhao Y."/>
        </authorList>
    </citation>
    <scope>SUCCINYLATION [LARGE SCALE ANALYSIS] AT LYS-201</scope>
    <scope>IDENTIFICATION BY MASS SPECTROMETRY [LARGE SCALE ANALYSIS]</scope>
    <source>
        <tissue>Embryonic fibroblast</tissue>
    </source>
</reference>
<reference key="8">
    <citation type="journal article" date="2015" name="J. Biol. Chem.">
        <title>Deletion of MLIP (muscle-enriched A-type lamin-interacting protein) leads to cardiac hyperactivation of Akt/mammalian target of rapamycin (mTOR) and impaired cardiac adaptation.</title>
        <authorList>
            <person name="Cattin M.E."/>
            <person name="Wang J."/>
            <person name="Weldrick J.J."/>
            <person name="Roeske C.L."/>
            <person name="Mak E."/>
            <person name="Thorn S.L."/>
            <person name="DaSilva J.N."/>
            <person name="Wang Y."/>
            <person name="Lusis A.J."/>
            <person name="Burgon P.G."/>
        </authorList>
    </citation>
    <scope>PHOSPHORYLATION AT SER-108</scope>
</reference>
<accession>Q9R078</accession>
<accession>Q91YN6</accession>
<comment type="function">
    <text evidence="1">Non-catalytic subunit of AMP-activated protein kinase (AMPK), an energy sensor protein kinase that plays a key role in regulating cellular energy metabolism. In response to reduction of intracellular ATP levels, AMPK activates energy-producing pathways and inhibits energy-consuming processes: inhibits protein, carbohydrate and lipid biosynthesis, as well as cell growth and proliferation. AMPK acts via direct phosphorylation of metabolic enzymes, and by longer-term effects via phosphorylation of transcription regulators. Also acts as a regulator of cellular polarity by remodeling the actin cytoskeleton; probably by indirectly activating myosin. Beta non-catalytic subunit acts as a scaffold on which the AMPK complex assembles, via its C-terminus that bridges alpha (PRKAA1 or PRKAA2) and gamma subunits (PRKAG1, PRKAG2 or PRKAG3) (By similarity).</text>
</comment>
<comment type="subunit">
    <text evidence="1">AMPK is a heterotrimer of an alpha catalytic subunit (PRKAA1 or PRKAA2), a beta (PRKAB1 or PRKAB2) and a gamma non-catalytic subunits (PRKAG1, PRKAG2 or PRKAG3). Interacts with FNIP1 and FNIP2 (By similarity).</text>
</comment>
<comment type="domain">
    <text evidence="1">The glycogen-binding domain may target AMPK to glycogen so that other factors like glycogen-bound debranching enzyme or protein phosphatases can directly affect AMPK activity.</text>
</comment>
<comment type="PTM">
    <text evidence="5">Phosphorylated when associated with the catalytic subunit (PRKAA1 or PRKAA2). Phosphorylated by ULK1; leading to negatively regulate AMPK activity and suggesting the existence of a regulatory feedback loop between ULK1 and AMPK.</text>
</comment>
<comment type="similarity">
    <text evidence="7">Belongs to the 5'-AMP-activated protein kinase beta subunit family.</text>
</comment>
<name>AAKB1_MOUSE</name>
<evidence type="ECO:0000250" key="1"/>
<evidence type="ECO:0000250" key="2">
    <source>
        <dbReference type="UniProtKB" id="P80386"/>
    </source>
</evidence>
<evidence type="ECO:0000250" key="3">
    <source>
        <dbReference type="UniProtKB" id="Q9Y478"/>
    </source>
</evidence>
<evidence type="ECO:0000256" key="4">
    <source>
        <dbReference type="SAM" id="MobiDB-lite"/>
    </source>
</evidence>
<evidence type="ECO:0000269" key="5">
    <source>
    </source>
</evidence>
<evidence type="ECO:0000269" key="6">
    <source>
    </source>
</evidence>
<evidence type="ECO:0000305" key="7"/>
<evidence type="ECO:0007744" key="8">
    <source>
    </source>
</evidence>
<evidence type="ECO:0007744" key="9">
    <source>
    </source>
</evidence>
<evidence type="ECO:0007744" key="10">
    <source>
    </source>
</evidence>
<evidence type="ECO:0007744" key="11">
    <source>
    </source>
</evidence>
<keyword id="KW-0275">Fatty acid biosynthesis</keyword>
<keyword id="KW-0276">Fatty acid metabolism</keyword>
<keyword id="KW-0444">Lipid biosynthesis</keyword>
<keyword id="KW-0443">Lipid metabolism</keyword>
<keyword id="KW-0449">Lipoprotein</keyword>
<keyword id="KW-0519">Myristate</keyword>
<keyword id="KW-0597">Phosphoprotein</keyword>
<keyword id="KW-1185">Reference proteome</keyword>
<feature type="initiator methionine" description="Removed" evidence="3">
    <location>
        <position position="1"/>
    </location>
</feature>
<feature type="chain" id="PRO_0000204364" description="5'-AMP-activated protein kinase subunit beta-1">
    <location>
        <begin position="2"/>
        <end position="270"/>
    </location>
</feature>
<feature type="region of interest" description="Disordered" evidence="4">
    <location>
        <begin position="1"/>
        <end position="44"/>
    </location>
</feature>
<feature type="region of interest" description="Glycogen-binding domain" evidence="1">
    <location>
        <begin position="68"/>
        <end position="163"/>
    </location>
</feature>
<feature type="compositionally biased region" description="Basic and acidic residues" evidence="4">
    <location>
        <begin position="9"/>
        <end position="36"/>
    </location>
</feature>
<feature type="modified residue" description="Phosphothreonine" evidence="3">
    <location>
        <position position="4"/>
    </location>
</feature>
<feature type="modified residue" description="Phosphoserine" evidence="3">
    <location>
        <position position="5"/>
    </location>
</feature>
<feature type="modified residue" description="Phosphoserine" evidence="3">
    <location>
        <position position="6"/>
    </location>
</feature>
<feature type="modified residue" description="Phosphothreonine" evidence="3">
    <location>
        <position position="19"/>
    </location>
</feature>
<feature type="modified residue" description="Phosphoserine; by autocatalysis" evidence="2">
    <location>
        <position position="24"/>
    </location>
</feature>
<feature type="modified residue" description="Phosphoserine; by autocatalysis" evidence="2">
    <location>
        <position position="25"/>
    </location>
</feature>
<feature type="modified residue" description="Phosphoserine" evidence="3">
    <location>
        <position position="40"/>
    </location>
</feature>
<feature type="modified residue" description="Phosphoserine" evidence="10">
    <location>
        <position position="96"/>
    </location>
</feature>
<feature type="modified residue" description="Phosphoserine" evidence="2">
    <location>
        <position position="101"/>
    </location>
</feature>
<feature type="modified residue" description="Phosphoserine; by autocatalysis" evidence="6 8 9 10">
    <location>
        <position position="108"/>
    </location>
</feature>
<feature type="modified residue" description="Phosphothreonine" evidence="3">
    <location>
        <position position="148"/>
    </location>
</feature>
<feature type="modified residue" description="Phosphoserine" evidence="10">
    <location>
        <position position="182"/>
    </location>
</feature>
<feature type="modified residue" description="N6-succinyllysine" evidence="11">
    <location>
        <position position="201"/>
    </location>
</feature>
<feature type="lipid moiety-binding region" description="N-myristoyl glycine" evidence="1">
    <location>
        <position position="2"/>
    </location>
</feature>
<proteinExistence type="evidence at protein level"/>
<dbReference type="EMBL" id="AF108215">
    <property type="protein sequence ID" value="AAF14222.1"/>
    <property type="molecule type" value="mRNA"/>
</dbReference>
<dbReference type="EMBL" id="BC016398">
    <property type="protein sequence ID" value="AAH16398.1"/>
    <property type="molecule type" value="mRNA"/>
</dbReference>
<dbReference type="CCDS" id="CCDS19598.1"/>
<dbReference type="RefSeq" id="NP_001404487.1">
    <property type="nucleotide sequence ID" value="NM_001417558.1"/>
</dbReference>
<dbReference type="RefSeq" id="NP_114075.1">
    <property type="nucleotide sequence ID" value="NM_031869.3"/>
</dbReference>
<dbReference type="RefSeq" id="XP_006530264.1">
    <property type="nucleotide sequence ID" value="XM_006530201.1"/>
</dbReference>
<dbReference type="SMR" id="Q9R078"/>
<dbReference type="BioGRID" id="202363">
    <property type="interactions" value="4"/>
</dbReference>
<dbReference type="ComplexPortal" id="CPX-5698">
    <property type="entry name" value="AMPK complex, alpha1-beta1-gamma1 variant"/>
</dbReference>
<dbReference type="ComplexPortal" id="CPX-5849">
    <property type="entry name" value="AMPK complex, alpha1-beta1-gamma2 variant"/>
</dbReference>
<dbReference type="ComplexPortal" id="CPX-5852">
    <property type="entry name" value="AMPK complex, alpha2-beta1-gamma1 variant"/>
</dbReference>
<dbReference type="ComplexPortal" id="CPX-5856">
    <property type="entry name" value="AMPK complex, alpha1-beta1-gamma3 variant"/>
</dbReference>
<dbReference type="ComplexPortal" id="CPX-5857">
    <property type="entry name" value="AMPK complex, alpha2-beta1-gamma3 variant"/>
</dbReference>
<dbReference type="ComplexPortal" id="CPX-5858">
    <property type="entry name" value="AMPK complex, alpha2-beta1-gamma2 variant"/>
</dbReference>
<dbReference type="CORUM" id="Q9R078"/>
<dbReference type="FunCoup" id="Q9R078">
    <property type="interactions" value="2592"/>
</dbReference>
<dbReference type="IntAct" id="Q9R078">
    <property type="interactions" value="7"/>
</dbReference>
<dbReference type="MINT" id="Q9R078"/>
<dbReference type="STRING" id="10090.ENSMUSP00000031486"/>
<dbReference type="BindingDB" id="Q9R078"/>
<dbReference type="ChEMBL" id="CHEMBL4524004"/>
<dbReference type="CarbonylDB" id="Q9R078"/>
<dbReference type="GlyGen" id="Q9R078">
    <property type="glycosylation" value="1 site, 1 O-linked glycan (1 site)"/>
</dbReference>
<dbReference type="iPTMnet" id="Q9R078"/>
<dbReference type="PhosphoSitePlus" id="Q9R078"/>
<dbReference type="jPOST" id="Q9R078"/>
<dbReference type="PaxDb" id="10090-ENSMUSP00000031486"/>
<dbReference type="ProteomicsDB" id="285894"/>
<dbReference type="Pumba" id="Q9R078"/>
<dbReference type="Antibodypedia" id="1328">
    <property type="antibodies" value="829 antibodies from 42 providers"/>
</dbReference>
<dbReference type="DNASU" id="19079"/>
<dbReference type="Ensembl" id="ENSMUST00000031486.14">
    <property type="protein sequence ID" value="ENSMUSP00000031486.8"/>
    <property type="gene ID" value="ENSMUSG00000029513.15"/>
</dbReference>
<dbReference type="Ensembl" id="ENSMUST00000111999.8">
    <property type="protein sequence ID" value="ENSMUSP00000107630.2"/>
    <property type="gene ID" value="ENSMUSG00000029513.15"/>
</dbReference>
<dbReference type="GeneID" id="19079"/>
<dbReference type="KEGG" id="mmu:19079"/>
<dbReference type="UCSC" id="uc008zew.1">
    <property type="organism name" value="mouse"/>
</dbReference>
<dbReference type="AGR" id="MGI:1336167"/>
<dbReference type="CTD" id="5564"/>
<dbReference type="MGI" id="MGI:1336167">
    <property type="gene designation" value="Prkab1"/>
</dbReference>
<dbReference type="VEuPathDB" id="HostDB:ENSMUSG00000029513"/>
<dbReference type="eggNOG" id="KOG1616">
    <property type="taxonomic scope" value="Eukaryota"/>
</dbReference>
<dbReference type="GeneTree" id="ENSGT00940000155307"/>
<dbReference type="HOGENOM" id="CLU_070949_2_0_1"/>
<dbReference type="InParanoid" id="Q9R078"/>
<dbReference type="OMA" id="QRTINAP"/>
<dbReference type="OrthoDB" id="531008at2759"/>
<dbReference type="PhylomeDB" id="Q9R078"/>
<dbReference type="TreeFam" id="TF313827"/>
<dbReference type="Reactome" id="R-MMU-1632852">
    <property type="pathway name" value="Macroautophagy"/>
</dbReference>
<dbReference type="Reactome" id="R-MMU-380972">
    <property type="pathway name" value="Energy dependent regulation of mTOR by LKB1-AMPK"/>
</dbReference>
<dbReference type="Reactome" id="R-MMU-5628897">
    <property type="pathway name" value="TP53 Regulates Metabolic Genes"/>
</dbReference>
<dbReference type="Reactome" id="R-MMU-6804756">
    <property type="pathway name" value="Regulation of TP53 Activity through Phosphorylation"/>
</dbReference>
<dbReference type="BioGRID-ORCS" id="19079">
    <property type="hits" value="2 hits in 81 CRISPR screens"/>
</dbReference>
<dbReference type="ChiTaRS" id="Prkab1">
    <property type="organism name" value="mouse"/>
</dbReference>
<dbReference type="PRO" id="PR:Q9R078"/>
<dbReference type="Proteomes" id="UP000000589">
    <property type="component" value="Chromosome 5"/>
</dbReference>
<dbReference type="RNAct" id="Q9R078">
    <property type="molecule type" value="protein"/>
</dbReference>
<dbReference type="Bgee" id="ENSMUSG00000029513">
    <property type="expression patterns" value="Expressed in granulocyte and 267 other cell types or tissues"/>
</dbReference>
<dbReference type="ExpressionAtlas" id="Q9R078">
    <property type="expression patterns" value="baseline and differential"/>
</dbReference>
<dbReference type="GO" id="GO:0005829">
    <property type="term" value="C:cytosol"/>
    <property type="evidence" value="ECO:0000304"/>
    <property type="project" value="Reactome"/>
</dbReference>
<dbReference type="GO" id="GO:0031588">
    <property type="term" value="C:nucleotide-activated protein kinase complex"/>
    <property type="evidence" value="ECO:0000266"/>
    <property type="project" value="ComplexPortal"/>
</dbReference>
<dbReference type="GO" id="GO:0005634">
    <property type="term" value="C:nucleus"/>
    <property type="evidence" value="ECO:0000314"/>
    <property type="project" value="MGI"/>
</dbReference>
<dbReference type="GO" id="GO:0004679">
    <property type="term" value="F:AMP-activated protein kinase activity"/>
    <property type="evidence" value="ECO:0000304"/>
    <property type="project" value="MGI"/>
</dbReference>
<dbReference type="GO" id="GO:0019901">
    <property type="term" value="F:protein kinase binding"/>
    <property type="evidence" value="ECO:0007669"/>
    <property type="project" value="Ensembl"/>
</dbReference>
<dbReference type="GO" id="GO:0031669">
    <property type="term" value="P:cellular response to nutrient levels"/>
    <property type="evidence" value="ECO:0000266"/>
    <property type="project" value="ComplexPortal"/>
</dbReference>
<dbReference type="GO" id="GO:0006633">
    <property type="term" value="P:fatty acid biosynthetic process"/>
    <property type="evidence" value="ECO:0007669"/>
    <property type="project" value="UniProtKB-KW"/>
</dbReference>
<dbReference type="GO" id="GO:0035878">
    <property type="term" value="P:nail development"/>
    <property type="evidence" value="ECO:0000315"/>
    <property type="project" value="MGI"/>
</dbReference>
<dbReference type="GO" id="GO:0120162">
    <property type="term" value="P:positive regulation of cold-induced thermogenesis"/>
    <property type="evidence" value="ECO:0000316"/>
    <property type="project" value="YuBioLab"/>
</dbReference>
<dbReference type="CDD" id="cd02859">
    <property type="entry name" value="E_set_AMPKbeta_like_N"/>
    <property type="match status" value="1"/>
</dbReference>
<dbReference type="FunFam" id="2.60.40.10:FF:000139">
    <property type="entry name" value="Protein kinase AMP-activated non-catalytic subunit beta 1"/>
    <property type="match status" value="1"/>
</dbReference>
<dbReference type="Gene3D" id="6.20.250.60">
    <property type="match status" value="1"/>
</dbReference>
<dbReference type="Gene3D" id="2.60.40.10">
    <property type="entry name" value="Immunoglobulins"/>
    <property type="match status" value="1"/>
</dbReference>
<dbReference type="InterPro" id="IPR032640">
    <property type="entry name" value="AMPK1_CBM"/>
</dbReference>
<dbReference type="InterPro" id="IPR006828">
    <property type="entry name" value="ASC_dom"/>
</dbReference>
<dbReference type="InterPro" id="IPR037256">
    <property type="entry name" value="ASC_dom_sf"/>
</dbReference>
<dbReference type="InterPro" id="IPR050827">
    <property type="entry name" value="CRP1_MDG1_kinase"/>
</dbReference>
<dbReference type="InterPro" id="IPR013783">
    <property type="entry name" value="Ig-like_fold"/>
</dbReference>
<dbReference type="InterPro" id="IPR014756">
    <property type="entry name" value="Ig_E-set"/>
</dbReference>
<dbReference type="PANTHER" id="PTHR10343">
    <property type="entry name" value="5'-AMP-ACTIVATED PROTEIN KINASE , BETA SUBUNIT"/>
    <property type="match status" value="1"/>
</dbReference>
<dbReference type="PANTHER" id="PTHR10343:SF84">
    <property type="entry name" value="5'-AMP-ACTIVATED PROTEIN KINASE SUBUNIT BETA-1"/>
    <property type="match status" value="1"/>
</dbReference>
<dbReference type="Pfam" id="PF16561">
    <property type="entry name" value="AMPK1_CBM"/>
    <property type="match status" value="1"/>
</dbReference>
<dbReference type="Pfam" id="PF04739">
    <property type="entry name" value="AMPKBI"/>
    <property type="match status" value="1"/>
</dbReference>
<dbReference type="SMART" id="SM01010">
    <property type="entry name" value="AMPKBI"/>
    <property type="match status" value="1"/>
</dbReference>
<dbReference type="SUPFAM" id="SSF160219">
    <property type="entry name" value="AMPKBI-like"/>
    <property type="match status" value="1"/>
</dbReference>
<dbReference type="SUPFAM" id="SSF81296">
    <property type="entry name" value="E set domains"/>
    <property type="match status" value="1"/>
</dbReference>
<gene>
    <name type="primary">Prkab1</name>
</gene>
<protein>
    <recommendedName>
        <fullName>5'-AMP-activated protein kinase subunit beta-1</fullName>
        <shortName>AMPK subunit beta-1</shortName>
        <shortName>AMPKb</shortName>
    </recommendedName>
</protein>
<organism>
    <name type="scientific">Mus musculus</name>
    <name type="common">Mouse</name>
    <dbReference type="NCBI Taxonomy" id="10090"/>
    <lineage>
        <taxon>Eukaryota</taxon>
        <taxon>Metazoa</taxon>
        <taxon>Chordata</taxon>
        <taxon>Craniata</taxon>
        <taxon>Vertebrata</taxon>
        <taxon>Euteleostomi</taxon>
        <taxon>Mammalia</taxon>
        <taxon>Eutheria</taxon>
        <taxon>Euarchontoglires</taxon>
        <taxon>Glires</taxon>
        <taxon>Rodentia</taxon>
        <taxon>Myomorpha</taxon>
        <taxon>Muroidea</taxon>
        <taxon>Muridae</taxon>
        <taxon>Murinae</taxon>
        <taxon>Mus</taxon>
        <taxon>Mus</taxon>
    </lineage>
</organism>
<sequence>MGNTSSERAALERQAGHKTPRRDSSGGAKDGDRPKILMDSPEDADIFHSEEIKAPEKEEFLAWQHDLEANDKAPAQARPTVFRWTGGGKEVYLSGSFNNWSKLPLTRSQNNFVAILDLPEGEHQYKFFVDGQWTHDPSEPIVTSQLGTVNNIIQVKKTDFEVFDALMVDSQKCSDVSELSSSPPGPYHQEPYMSKPEERFKAPPILPPHLLQVILNKDTGISCDPALLPEPNHVMLNHLYALSIKDGVMVLSATHRYKKKYVTTLLYKPI</sequence>